<protein>
    <recommendedName>
        <fullName>Olfactory receptor 8K5</fullName>
    </recommendedName>
    <alternativeName>
        <fullName>Olfactory receptor OR11-174</fullName>
    </alternativeName>
</protein>
<comment type="function">
    <text evidence="3">Odorant receptor.</text>
</comment>
<comment type="subcellular location">
    <subcellularLocation>
        <location>Cell membrane</location>
        <topology>Multi-pass membrane protein</topology>
    </subcellularLocation>
</comment>
<comment type="similarity">
    <text evidence="2">Belongs to the G-protein coupled receptor 1 family.</text>
</comment>
<comment type="online information" name="Human Olfactory Receptor Data Exploratorium (HORDE)">
    <link uri="http://genome.weizmann.ac.il/horde/card/index/symbol:OR8K5"/>
</comment>
<reference key="1">
    <citation type="submission" date="2001-07" db="EMBL/GenBank/DDBJ databases">
        <title>Genome-wide discovery and analysis of human seven transmembrane helix receptor genes.</title>
        <authorList>
            <person name="Suwa M."/>
            <person name="Sato T."/>
            <person name="Okouchi I."/>
            <person name="Arita M."/>
            <person name="Futami K."/>
            <person name="Matsumoto S."/>
            <person name="Tsutsumi S."/>
            <person name="Aburatani H."/>
            <person name="Asai K."/>
            <person name="Akiyama Y."/>
        </authorList>
    </citation>
    <scope>NUCLEOTIDE SEQUENCE [GENOMIC DNA]</scope>
</reference>
<reference key="2">
    <citation type="journal article" date="2004" name="Proc. Natl. Acad. Sci. U.S.A.">
        <title>The human olfactory receptor gene family.</title>
        <authorList>
            <person name="Malnic B."/>
            <person name="Godfrey P.A."/>
            <person name="Buck L.B."/>
        </authorList>
    </citation>
    <scope>IDENTIFICATION</scope>
</reference>
<reference key="3">
    <citation type="journal article" date="2004" name="Proc. Natl. Acad. Sci. U.S.A.">
        <authorList>
            <person name="Malnic B."/>
            <person name="Godfrey P.A."/>
            <person name="Buck L.B."/>
        </authorList>
    </citation>
    <scope>ERRATUM OF PUBMED:14983052</scope>
</reference>
<gene>
    <name type="primary">OR8K5</name>
</gene>
<feature type="chain" id="PRO_0000150673" description="Olfactory receptor 8K5">
    <location>
        <begin position="1"/>
        <end position="307"/>
    </location>
</feature>
<feature type="topological domain" description="Extracellular" evidence="1">
    <location>
        <begin position="1"/>
        <end position="25"/>
    </location>
</feature>
<feature type="transmembrane region" description="Helical; Name=1" evidence="1">
    <location>
        <begin position="26"/>
        <end position="46"/>
    </location>
</feature>
<feature type="topological domain" description="Cytoplasmic" evidence="1">
    <location>
        <begin position="47"/>
        <end position="54"/>
    </location>
</feature>
<feature type="transmembrane region" description="Helical; Name=2" evidence="1">
    <location>
        <begin position="55"/>
        <end position="75"/>
    </location>
</feature>
<feature type="topological domain" description="Extracellular" evidence="1">
    <location>
        <begin position="76"/>
        <end position="99"/>
    </location>
</feature>
<feature type="transmembrane region" description="Helical; Name=3" evidence="1">
    <location>
        <begin position="100"/>
        <end position="120"/>
    </location>
</feature>
<feature type="topological domain" description="Cytoplasmic" evidence="1">
    <location>
        <begin position="121"/>
        <end position="139"/>
    </location>
</feature>
<feature type="transmembrane region" description="Helical; Name=4" evidence="1">
    <location>
        <begin position="140"/>
        <end position="160"/>
    </location>
</feature>
<feature type="topological domain" description="Extracellular" evidence="1">
    <location>
        <begin position="161"/>
        <end position="197"/>
    </location>
</feature>
<feature type="transmembrane region" description="Helical; Name=5" evidence="1">
    <location>
        <begin position="198"/>
        <end position="217"/>
    </location>
</feature>
<feature type="topological domain" description="Cytoplasmic" evidence="1">
    <location>
        <begin position="218"/>
        <end position="237"/>
    </location>
</feature>
<feature type="transmembrane region" description="Helical; Name=6" evidence="1">
    <location>
        <begin position="238"/>
        <end position="258"/>
    </location>
</feature>
<feature type="topological domain" description="Extracellular" evidence="1">
    <location>
        <begin position="259"/>
        <end position="271"/>
    </location>
</feature>
<feature type="transmembrane region" description="Helical; Name=7" evidence="1">
    <location>
        <begin position="272"/>
        <end position="292"/>
    </location>
</feature>
<feature type="topological domain" description="Cytoplasmic" evidence="1">
    <location>
        <begin position="293"/>
        <end position="307"/>
    </location>
</feature>
<feature type="glycosylation site" description="N-linked (GlcNAc...) asparagine" evidence="1">
    <location>
        <position position="5"/>
    </location>
</feature>
<feature type="glycosylation site" description="N-linked (GlcNAc...) asparagine" evidence="1">
    <location>
        <position position="263"/>
    </location>
</feature>
<feature type="disulfide bond" evidence="2">
    <location>
        <begin position="97"/>
        <end position="189"/>
    </location>
</feature>
<feature type="sequence variant" id="VAR_048056" description="In dbSNP:rs2512938.">
    <original>F</original>
    <variation>S</variation>
    <location>
        <position position="68"/>
    </location>
</feature>
<dbReference type="EMBL" id="AB065542">
    <property type="protein sequence ID" value="BAC05787.1"/>
    <property type="molecule type" value="Genomic_DNA"/>
</dbReference>
<dbReference type="EMBL" id="BK004347">
    <property type="protein sequence ID" value="DAA04745.1"/>
    <property type="molecule type" value="Genomic_DNA"/>
</dbReference>
<dbReference type="CCDS" id="CCDS31521.1"/>
<dbReference type="RefSeq" id="NP_001004058.2">
    <property type="nucleotide sequence ID" value="NM_001004058.2"/>
</dbReference>
<dbReference type="SMR" id="Q8NH50"/>
<dbReference type="FunCoup" id="Q8NH50">
    <property type="interactions" value="416"/>
</dbReference>
<dbReference type="STRING" id="9606.ENSP00000323853"/>
<dbReference type="GlyCosmos" id="Q8NH50">
    <property type="glycosylation" value="2 sites, No reported glycans"/>
</dbReference>
<dbReference type="GlyGen" id="Q8NH50">
    <property type="glycosylation" value="2 sites"/>
</dbReference>
<dbReference type="iPTMnet" id="Q8NH50"/>
<dbReference type="PhosphoSitePlus" id="Q8NH50"/>
<dbReference type="BioMuta" id="OR8K5"/>
<dbReference type="DMDM" id="38372809"/>
<dbReference type="MassIVE" id="Q8NH50"/>
<dbReference type="PaxDb" id="9606-ENSP00000323853"/>
<dbReference type="Antibodypedia" id="72061">
    <property type="antibodies" value="15 antibodies from 9 providers"/>
</dbReference>
<dbReference type="DNASU" id="219453"/>
<dbReference type="Ensembl" id="ENST00000313447.1">
    <property type="protein sequence ID" value="ENSP00000323853.1"/>
    <property type="gene ID" value="ENSG00000181752.3"/>
</dbReference>
<dbReference type="GeneID" id="219453"/>
<dbReference type="KEGG" id="hsa:219453"/>
<dbReference type="MANE-Select" id="ENST00000313447.1">
    <property type="protein sequence ID" value="ENSP00000323853.1"/>
    <property type="RefSeq nucleotide sequence ID" value="NM_001004058.2"/>
    <property type="RefSeq protein sequence ID" value="NP_001004058.2"/>
</dbReference>
<dbReference type="UCSC" id="uc010rja.2">
    <property type="organism name" value="human"/>
</dbReference>
<dbReference type="AGR" id="HGNC:15315"/>
<dbReference type="CTD" id="219453"/>
<dbReference type="GeneCards" id="OR8K5"/>
<dbReference type="HGNC" id="HGNC:15315">
    <property type="gene designation" value="OR8K5"/>
</dbReference>
<dbReference type="HPA" id="ENSG00000181752">
    <property type="expression patterns" value="Not detected"/>
</dbReference>
<dbReference type="neXtProt" id="NX_Q8NH50"/>
<dbReference type="PharmGKB" id="PA32779"/>
<dbReference type="VEuPathDB" id="HostDB:ENSG00000181752"/>
<dbReference type="eggNOG" id="ENOG502T922">
    <property type="taxonomic scope" value="Eukaryota"/>
</dbReference>
<dbReference type="GeneTree" id="ENSGT00950000182718"/>
<dbReference type="HOGENOM" id="CLU_012526_1_0_1"/>
<dbReference type="InParanoid" id="Q8NH50"/>
<dbReference type="OMA" id="YMQPKST"/>
<dbReference type="OrthoDB" id="9518048at2759"/>
<dbReference type="PAN-GO" id="Q8NH50">
    <property type="GO annotations" value="4 GO annotations based on evolutionary models"/>
</dbReference>
<dbReference type="PhylomeDB" id="Q8NH50"/>
<dbReference type="TreeFam" id="TF352753"/>
<dbReference type="PathwayCommons" id="Q8NH50"/>
<dbReference type="Reactome" id="R-HSA-9752946">
    <property type="pathway name" value="Expression and translocation of olfactory receptors"/>
</dbReference>
<dbReference type="BioGRID-ORCS" id="219453">
    <property type="hits" value="13 hits in 754 CRISPR screens"/>
</dbReference>
<dbReference type="GeneWiki" id="OR8K5"/>
<dbReference type="GenomeRNAi" id="219453"/>
<dbReference type="Pharos" id="Q8NH50">
    <property type="development level" value="Tdark"/>
</dbReference>
<dbReference type="PRO" id="PR:Q8NH50"/>
<dbReference type="Proteomes" id="UP000005640">
    <property type="component" value="Chromosome 11"/>
</dbReference>
<dbReference type="RNAct" id="Q8NH50">
    <property type="molecule type" value="protein"/>
</dbReference>
<dbReference type="Bgee" id="ENSG00000181752">
    <property type="expression patterns" value="Expressed in male germ line stem cell (sensu Vertebrata) in testis and 1 other cell type or tissue"/>
</dbReference>
<dbReference type="GO" id="GO:0005886">
    <property type="term" value="C:plasma membrane"/>
    <property type="evidence" value="ECO:0007669"/>
    <property type="project" value="UniProtKB-SubCell"/>
</dbReference>
<dbReference type="GO" id="GO:0004930">
    <property type="term" value="F:G protein-coupled receptor activity"/>
    <property type="evidence" value="ECO:0007669"/>
    <property type="project" value="UniProtKB-KW"/>
</dbReference>
<dbReference type="GO" id="GO:0004984">
    <property type="term" value="F:olfactory receptor activity"/>
    <property type="evidence" value="ECO:0007669"/>
    <property type="project" value="InterPro"/>
</dbReference>
<dbReference type="CDD" id="cd15413">
    <property type="entry name" value="7tmA_OR8K-like"/>
    <property type="match status" value="1"/>
</dbReference>
<dbReference type="FunFam" id="1.20.1070.10:FF:000003">
    <property type="entry name" value="Olfactory receptor"/>
    <property type="match status" value="1"/>
</dbReference>
<dbReference type="Gene3D" id="1.20.1070.10">
    <property type="entry name" value="Rhodopsin 7-helix transmembrane proteins"/>
    <property type="match status" value="1"/>
</dbReference>
<dbReference type="InterPro" id="IPR000276">
    <property type="entry name" value="GPCR_Rhodpsn"/>
</dbReference>
<dbReference type="InterPro" id="IPR017452">
    <property type="entry name" value="GPCR_Rhodpsn_7TM"/>
</dbReference>
<dbReference type="InterPro" id="IPR000725">
    <property type="entry name" value="Olfact_rcpt"/>
</dbReference>
<dbReference type="PANTHER" id="PTHR48018">
    <property type="entry name" value="OLFACTORY RECEPTOR"/>
    <property type="match status" value="1"/>
</dbReference>
<dbReference type="Pfam" id="PF13853">
    <property type="entry name" value="7tm_4"/>
    <property type="match status" value="1"/>
</dbReference>
<dbReference type="PRINTS" id="PR00237">
    <property type="entry name" value="GPCRRHODOPSN"/>
</dbReference>
<dbReference type="PRINTS" id="PR00245">
    <property type="entry name" value="OLFACTORYR"/>
</dbReference>
<dbReference type="SUPFAM" id="SSF81321">
    <property type="entry name" value="Family A G protein-coupled receptor-like"/>
    <property type="match status" value="1"/>
</dbReference>
<dbReference type="PROSITE" id="PS00237">
    <property type="entry name" value="G_PROTEIN_RECEP_F1_1"/>
    <property type="match status" value="1"/>
</dbReference>
<dbReference type="PROSITE" id="PS50262">
    <property type="entry name" value="G_PROTEIN_RECEP_F1_2"/>
    <property type="match status" value="1"/>
</dbReference>
<name>OR8K5_HUMAN</name>
<organism>
    <name type="scientific">Homo sapiens</name>
    <name type="common">Human</name>
    <dbReference type="NCBI Taxonomy" id="9606"/>
    <lineage>
        <taxon>Eukaryota</taxon>
        <taxon>Metazoa</taxon>
        <taxon>Chordata</taxon>
        <taxon>Craniata</taxon>
        <taxon>Vertebrata</taxon>
        <taxon>Euteleostomi</taxon>
        <taxon>Mammalia</taxon>
        <taxon>Eutheria</taxon>
        <taxon>Euarchontoglires</taxon>
        <taxon>Primates</taxon>
        <taxon>Haplorrhini</taxon>
        <taxon>Catarrhini</taxon>
        <taxon>Hominidae</taxon>
        <taxon>Homo</taxon>
    </lineage>
</organism>
<proteinExistence type="inferred from homology"/>
<keyword id="KW-1003">Cell membrane</keyword>
<keyword id="KW-1015">Disulfide bond</keyword>
<keyword id="KW-0297">G-protein coupled receptor</keyword>
<keyword id="KW-0325">Glycoprotein</keyword>
<keyword id="KW-0472">Membrane</keyword>
<keyword id="KW-0552">Olfaction</keyword>
<keyword id="KW-0675">Receptor</keyword>
<keyword id="KW-1185">Reference proteome</keyword>
<keyword id="KW-0716">Sensory transduction</keyword>
<keyword id="KW-0807">Transducer</keyword>
<keyword id="KW-0812">Transmembrane</keyword>
<keyword id="KW-1133">Transmembrane helix</keyword>
<sequence>MGQHNLTVLTEFILMELTRRPELQIPLFGVFLVIYLITVVGNLTMIILTKLDSHLHTPMYFSIRHLAFVDLGNSTVICPKVLANFVVDRNTISYYACAAQLAFFLMFIISEFFILSAMAYDRYVAICNPLLYYVIMSQRLCHVLVGIQYLYSTFQALMFTIKIFTLTFCGSNVISHFYCDDVPLLPMLCSNAQEIELLSILFSVFNLISSFLIVLVSYMLILLAICQMHSAEGRKKAFSTCGSHLTVVVVFYGSLLFMYMQPNSTHFFDTDKMASVFYTLVIPMLNPLIYSLRNEEVKNAFYKLFEN</sequence>
<evidence type="ECO:0000255" key="1"/>
<evidence type="ECO:0000255" key="2">
    <source>
        <dbReference type="PROSITE-ProRule" id="PRU00521"/>
    </source>
</evidence>
<evidence type="ECO:0000305" key="3"/>
<accession>Q8NH50</accession>
<accession>Q6IFB5</accession>